<evidence type="ECO:0000255" key="1">
    <source>
        <dbReference type="HAMAP-Rule" id="MF_01080"/>
    </source>
</evidence>
<feature type="chain" id="PRO_1000084714" description="tRNA pseudouridine synthase B">
    <location>
        <begin position="1"/>
        <end position="314"/>
    </location>
</feature>
<feature type="active site" description="Nucleophile" evidence="1">
    <location>
        <position position="47"/>
    </location>
</feature>
<keyword id="KW-0413">Isomerase</keyword>
<keyword id="KW-0819">tRNA processing</keyword>
<protein>
    <recommendedName>
        <fullName evidence="1">tRNA pseudouridine synthase B</fullName>
        <ecNumber evidence="1">5.4.99.25</ecNumber>
    </recommendedName>
    <alternativeName>
        <fullName evidence="1">tRNA pseudouridine(55) synthase</fullName>
        <shortName evidence="1">Psi55 synthase</shortName>
    </alternativeName>
    <alternativeName>
        <fullName evidence="1">tRNA pseudouridylate synthase</fullName>
    </alternativeName>
    <alternativeName>
        <fullName evidence="1">tRNA-uridine isomerase</fullName>
    </alternativeName>
</protein>
<accession>A7MZI3</accession>
<proteinExistence type="inferred from homology"/>
<reference key="1">
    <citation type="submission" date="2007-08" db="EMBL/GenBank/DDBJ databases">
        <authorList>
            <consortium name="The Vibrio harveyi Genome Sequencing Project"/>
            <person name="Bassler B."/>
            <person name="Clifton S.W."/>
            <person name="Fulton L."/>
            <person name="Delehaunty K."/>
            <person name="Fronick C."/>
            <person name="Harrison M."/>
            <person name="Markivic C."/>
            <person name="Fulton R."/>
            <person name="Tin-Wollam A.-M."/>
            <person name="Shah N."/>
            <person name="Pepin K."/>
            <person name="Nash W."/>
            <person name="Thiruvilangam P."/>
            <person name="Bhonagiri V."/>
            <person name="Waters C."/>
            <person name="Tu K.C."/>
            <person name="Irgon J."/>
            <person name="Wilson R.K."/>
        </authorList>
    </citation>
    <scope>NUCLEOTIDE SEQUENCE [LARGE SCALE GENOMIC DNA]</scope>
    <source>
        <strain>ATCC BAA-1116 / BB120</strain>
    </source>
</reference>
<sequence>MARRRKGRPINGVILLDKPTGISSNDALQKVKRIFFAEKAGHTGALDPLATGMLPICLGEATKFSQFLLDSDKRYRVIAKLGERTDTSDSDGEVVETRPVDVNLEKLEACIDTFRGESDQVPSMFSALKYQGKPLYEYARKGIEVPRESRKITVYEIILHRFEGDEVEMEVHCSKGTYIRTIVDDLGEMLGCGAHVTMLRRTGVAKYPYEKMVTLEQLNELLEQAHRDEVAPKELLDPLLLPMDTAVEDLPEVNLKAELTNLVQHGMPVQVLGAPEGTPIRMTSGEDKLFIGVAEVNDDGKVAPKRLVVFRDEE</sequence>
<organism>
    <name type="scientific">Vibrio campbellii (strain ATCC BAA-1116)</name>
    <dbReference type="NCBI Taxonomy" id="2902295"/>
    <lineage>
        <taxon>Bacteria</taxon>
        <taxon>Pseudomonadati</taxon>
        <taxon>Pseudomonadota</taxon>
        <taxon>Gammaproteobacteria</taxon>
        <taxon>Vibrionales</taxon>
        <taxon>Vibrionaceae</taxon>
        <taxon>Vibrio</taxon>
    </lineage>
</organism>
<name>TRUB_VIBC1</name>
<dbReference type="EC" id="5.4.99.25" evidence="1"/>
<dbReference type="EMBL" id="CP000789">
    <property type="protein sequence ID" value="ABU72341.1"/>
    <property type="molecule type" value="Genomic_DNA"/>
</dbReference>
<dbReference type="RefSeq" id="WP_012128821.1">
    <property type="nucleotide sequence ID" value="NC_009783.1"/>
</dbReference>
<dbReference type="SMR" id="A7MZI3"/>
<dbReference type="KEGG" id="vha:VIBHAR_03394"/>
<dbReference type="PATRIC" id="fig|338187.25.peg.2802"/>
<dbReference type="Proteomes" id="UP000008152">
    <property type="component" value="Chromosome I"/>
</dbReference>
<dbReference type="GO" id="GO:0003723">
    <property type="term" value="F:RNA binding"/>
    <property type="evidence" value="ECO:0007669"/>
    <property type="project" value="InterPro"/>
</dbReference>
<dbReference type="GO" id="GO:0160148">
    <property type="term" value="F:tRNA pseudouridine(55) synthase activity"/>
    <property type="evidence" value="ECO:0007669"/>
    <property type="project" value="UniProtKB-EC"/>
</dbReference>
<dbReference type="GO" id="GO:1990481">
    <property type="term" value="P:mRNA pseudouridine synthesis"/>
    <property type="evidence" value="ECO:0007669"/>
    <property type="project" value="TreeGrafter"/>
</dbReference>
<dbReference type="GO" id="GO:0031119">
    <property type="term" value="P:tRNA pseudouridine synthesis"/>
    <property type="evidence" value="ECO:0007669"/>
    <property type="project" value="UniProtKB-UniRule"/>
</dbReference>
<dbReference type="CDD" id="cd02573">
    <property type="entry name" value="PseudoU_synth_EcTruB"/>
    <property type="match status" value="1"/>
</dbReference>
<dbReference type="CDD" id="cd21152">
    <property type="entry name" value="PUA_TruB_bacterial"/>
    <property type="match status" value="1"/>
</dbReference>
<dbReference type="FunFam" id="3.30.2350.10:FF:000003">
    <property type="entry name" value="tRNA pseudouridine synthase B"/>
    <property type="match status" value="1"/>
</dbReference>
<dbReference type="Gene3D" id="3.30.2350.10">
    <property type="entry name" value="Pseudouridine synthase"/>
    <property type="match status" value="1"/>
</dbReference>
<dbReference type="Gene3D" id="2.30.130.10">
    <property type="entry name" value="PUA domain"/>
    <property type="match status" value="1"/>
</dbReference>
<dbReference type="HAMAP" id="MF_01080">
    <property type="entry name" value="TruB_bact"/>
    <property type="match status" value="1"/>
</dbReference>
<dbReference type="InterPro" id="IPR020103">
    <property type="entry name" value="PsdUridine_synth_cat_dom_sf"/>
</dbReference>
<dbReference type="InterPro" id="IPR002501">
    <property type="entry name" value="PsdUridine_synth_N"/>
</dbReference>
<dbReference type="InterPro" id="IPR015947">
    <property type="entry name" value="PUA-like_sf"/>
</dbReference>
<dbReference type="InterPro" id="IPR036974">
    <property type="entry name" value="PUA_sf"/>
</dbReference>
<dbReference type="InterPro" id="IPR014780">
    <property type="entry name" value="tRNA_psdUridine_synth_TruB"/>
</dbReference>
<dbReference type="InterPro" id="IPR015240">
    <property type="entry name" value="tRNA_sdUridine_synth_fam1_C"/>
</dbReference>
<dbReference type="InterPro" id="IPR032819">
    <property type="entry name" value="TruB_C"/>
</dbReference>
<dbReference type="NCBIfam" id="TIGR00431">
    <property type="entry name" value="TruB"/>
    <property type="match status" value="1"/>
</dbReference>
<dbReference type="PANTHER" id="PTHR13767:SF2">
    <property type="entry name" value="PSEUDOURIDYLATE SYNTHASE TRUB1"/>
    <property type="match status" value="1"/>
</dbReference>
<dbReference type="PANTHER" id="PTHR13767">
    <property type="entry name" value="TRNA-PSEUDOURIDINE SYNTHASE"/>
    <property type="match status" value="1"/>
</dbReference>
<dbReference type="Pfam" id="PF09157">
    <property type="entry name" value="TruB-C_2"/>
    <property type="match status" value="1"/>
</dbReference>
<dbReference type="Pfam" id="PF16198">
    <property type="entry name" value="TruB_C_2"/>
    <property type="match status" value="1"/>
</dbReference>
<dbReference type="Pfam" id="PF01509">
    <property type="entry name" value="TruB_N"/>
    <property type="match status" value="1"/>
</dbReference>
<dbReference type="SUPFAM" id="SSF55120">
    <property type="entry name" value="Pseudouridine synthase"/>
    <property type="match status" value="1"/>
</dbReference>
<dbReference type="SUPFAM" id="SSF88697">
    <property type="entry name" value="PUA domain-like"/>
    <property type="match status" value="1"/>
</dbReference>
<gene>
    <name evidence="1" type="primary">truB</name>
    <name type="ordered locus">VIBHAR_03394</name>
</gene>
<comment type="function">
    <text evidence="1">Responsible for synthesis of pseudouridine from uracil-55 in the psi GC loop of transfer RNAs.</text>
</comment>
<comment type="catalytic activity">
    <reaction evidence="1">
        <text>uridine(55) in tRNA = pseudouridine(55) in tRNA</text>
        <dbReference type="Rhea" id="RHEA:42532"/>
        <dbReference type="Rhea" id="RHEA-COMP:10101"/>
        <dbReference type="Rhea" id="RHEA-COMP:10102"/>
        <dbReference type="ChEBI" id="CHEBI:65314"/>
        <dbReference type="ChEBI" id="CHEBI:65315"/>
        <dbReference type="EC" id="5.4.99.25"/>
    </reaction>
</comment>
<comment type="similarity">
    <text evidence="1">Belongs to the pseudouridine synthase TruB family. Type 1 subfamily.</text>
</comment>